<organism>
    <name type="scientific">Escherichia coli O6:H1 (strain CFT073 / ATCC 700928 / UPEC)</name>
    <dbReference type="NCBI Taxonomy" id="199310"/>
    <lineage>
        <taxon>Bacteria</taxon>
        <taxon>Pseudomonadati</taxon>
        <taxon>Pseudomonadota</taxon>
        <taxon>Gammaproteobacteria</taxon>
        <taxon>Enterobacterales</taxon>
        <taxon>Enterobacteriaceae</taxon>
        <taxon>Escherichia</taxon>
    </lineage>
</organism>
<comment type="function">
    <text evidence="1">High affinity, high specificity proton-dependent sulfate transporter, which mediates sulfate uptake. Provides the sulfur source for the cysteine synthesis pathway.</text>
</comment>
<comment type="subcellular location">
    <subcellularLocation>
        <location evidence="1">Cell inner membrane</location>
        <topology evidence="1">Multi-pass membrane protein</topology>
    </subcellularLocation>
</comment>
<comment type="similarity">
    <text evidence="1">Belongs to the CysZ family.</text>
</comment>
<evidence type="ECO:0000255" key="1">
    <source>
        <dbReference type="HAMAP-Rule" id="MF_00468"/>
    </source>
</evidence>
<sequence length="253" mass="29331">MVSSFTSAPRSGFYYFAQGWKLVLQPGIRRFVILPLLVNILLMGGAFWWLFTQLDVWIPTLMSYVPDWLQWLSYLLWPLAVISVLLVFGYFFSTIANWIAAPFNGLLAEQLEARLTGATPPDTGIFGIMKDVPRIMKREWQKFAWYLPRAIVLLILYFIPGIGQTVAPVLWFLFSAWMLAIQYCDYPFDNHKVPFKEMRTALRTRKITNMQFGALTSLFTMIPLLNLFIMPVAVCGATAMWVDCYRDKHAMWR</sequence>
<dbReference type="EMBL" id="AE014075">
    <property type="protein sequence ID" value="AAN81397.1"/>
    <property type="molecule type" value="Genomic_DNA"/>
</dbReference>
<dbReference type="RefSeq" id="WP_000254826.1">
    <property type="nucleotide sequence ID" value="NZ_CP051263.1"/>
</dbReference>
<dbReference type="SMR" id="Q8FFB9"/>
<dbReference type="STRING" id="199310.c2947"/>
<dbReference type="KEGG" id="ecc:c2947"/>
<dbReference type="eggNOG" id="COG2981">
    <property type="taxonomic scope" value="Bacteria"/>
</dbReference>
<dbReference type="HOGENOM" id="CLU_070331_1_0_6"/>
<dbReference type="BioCyc" id="ECOL199310:C2947-MONOMER"/>
<dbReference type="Proteomes" id="UP000001410">
    <property type="component" value="Chromosome"/>
</dbReference>
<dbReference type="GO" id="GO:0005886">
    <property type="term" value="C:plasma membrane"/>
    <property type="evidence" value="ECO:0007669"/>
    <property type="project" value="UniProtKB-SubCell"/>
</dbReference>
<dbReference type="GO" id="GO:0009675">
    <property type="term" value="F:high-affinity sulfate:proton symporter activity"/>
    <property type="evidence" value="ECO:0007669"/>
    <property type="project" value="TreeGrafter"/>
</dbReference>
<dbReference type="GO" id="GO:0019344">
    <property type="term" value="P:cysteine biosynthetic process"/>
    <property type="evidence" value="ECO:0007669"/>
    <property type="project" value="UniProtKB-UniRule"/>
</dbReference>
<dbReference type="GO" id="GO:0000103">
    <property type="term" value="P:sulfate assimilation"/>
    <property type="evidence" value="ECO:0007669"/>
    <property type="project" value="InterPro"/>
</dbReference>
<dbReference type="HAMAP" id="MF_00468">
    <property type="entry name" value="CysZ"/>
    <property type="match status" value="1"/>
</dbReference>
<dbReference type="InterPro" id="IPR050480">
    <property type="entry name" value="CysZ_sulfate_transptr"/>
</dbReference>
<dbReference type="InterPro" id="IPR022985">
    <property type="entry name" value="Sulfate_CysZ"/>
</dbReference>
<dbReference type="NCBIfam" id="NF003433">
    <property type="entry name" value="PRK04949.1"/>
    <property type="match status" value="1"/>
</dbReference>
<dbReference type="PANTHER" id="PTHR37468">
    <property type="entry name" value="SULFATE TRANSPORTER CYSZ"/>
    <property type="match status" value="1"/>
</dbReference>
<dbReference type="PANTHER" id="PTHR37468:SF1">
    <property type="entry name" value="SULFATE TRANSPORTER CYSZ"/>
    <property type="match status" value="1"/>
</dbReference>
<dbReference type="Pfam" id="PF07264">
    <property type="entry name" value="EI24"/>
    <property type="match status" value="1"/>
</dbReference>
<keyword id="KW-0028">Amino-acid biosynthesis</keyword>
<keyword id="KW-0997">Cell inner membrane</keyword>
<keyword id="KW-1003">Cell membrane</keyword>
<keyword id="KW-0198">Cysteine biosynthesis</keyword>
<keyword id="KW-0472">Membrane</keyword>
<keyword id="KW-1185">Reference proteome</keyword>
<keyword id="KW-0764">Sulfate transport</keyword>
<keyword id="KW-0812">Transmembrane</keyword>
<keyword id="KW-1133">Transmembrane helix</keyword>
<keyword id="KW-0813">Transport</keyword>
<reference key="1">
    <citation type="journal article" date="2002" name="Proc. Natl. Acad. Sci. U.S.A.">
        <title>Extensive mosaic structure revealed by the complete genome sequence of uropathogenic Escherichia coli.</title>
        <authorList>
            <person name="Welch R.A."/>
            <person name="Burland V."/>
            <person name="Plunkett G. III"/>
            <person name="Redford P."/>
            <person name="Roesch P."/>
            <person name="Rasko D."/>
            <person name="Buckles E.L."/>
            <person name="Liou S.-R."/>
            <person name="Boutin A."/>
            <person name="Hackett J."/>
            <person name="Stroud D."/>
            <person name="Mayhew G.F."/>
            <person name="Rose D.J."/>
            <person name="Zhou S."/>
            <person name="Schwartz D.C."/>
            <person name="Perna N.T."/>
            <person name="Mobley H.L.T."/>
            <person name="Donnenberg M.S."/>
            <person name="Blattner F.R."/>
        </authorList>
    </citation>
    <scope>NUCLEOTIDE SEQUENCE [LARGE SCALE GENOMIC DNA]</scope>
    <source>
        <strain>CFT073 / ATCC 700928 / UPEC</strain>
    </source>
</reference>
<name>CYSZ_ECOL6</name>
<accession>Q8FFB9</accession>
<feature type="chain" id="PRO_0000204338" description="Sulfate transporter CysZ">
    <location>
        <begin position="1"/>
        <end position="253"/>
    </location>
</feature>
<feature type="transmembrane region" description="Helical" evidence="1">
    <location>
        <begin position="31"/>
        <end position="51"/>
    </location>
</feature>
<feature type="transmembrane region" description="Helical" evidence="1">
    <location>
        <begin position="75"/>
        <end position="95"/>
    </location>
</feature>
<feature type="transmembrane region" description="Helical" evidence="1">
    <location>
        <begin position="151"/>
        <end position="171"/>
    </location>
</feature>
<feature type="transmembrane region" description="Helical" evidence="1">
    <location>
        <begin position="222"/>
        <end position="242"/>
    </location>
</feature>
<proteinExistence type="inferred from homology"/>
<gene>
    <name evidence="1" type="primary">cysZ</name>
    <name type="ordered locus">c2947</name>
</gene>
<protein>
    <recommendedName>
        <fullName evidence="1">Sulfate transporter CysZ</fullName>
    </recommendedName>
</protein>